<dbReference type="EC" id="2.3.1.184"/>
<dbReference type="EMBL" id="M19039">
    <property type="protein sequence ID" value="AAA27552.1"/>
    <property type="molecule type" value="Genomic_DNA"/>
</dbReference>
<dbReference type="EMBL" id="Y00509">
    <property type="protein sequence ID" value="CAA68562.1"/>
    <property type="status" value="ALT_SEQ"/>
    <property type="molecule type" value="Genomic_DNA"/>
</dbReference>
<dbReference type="EMBL" id="AF170104">
    <property type="protein sequence ID" value="AAD48474.1"/>
    <property type="molecule type" value="Genomic_DNA"/>
</dbReference>
<dbReference type="PIR" id="B28705">
    <property type="entry name" value="B28705"/>
</dbReference>
<dbReference type="RefSeq" id="WP_005423459.1">
    <property type="nucleotide sequence ID" value="NZ_WOBZ01000007.1"/>
</dbReference>
<dbReference type="SMR" id="P12747"/>
<dbReference type="BioCyc" id="MetaCyc:MONOMER-14564"/>
<dbReference type="GO" id="GO:0061579">
    <property type="term" value="F:N-acyl homoserine lactone synthase activity"/>
    <property type="evidence" value="ECO:0007669"/>
    <property type="project" value="UniProtKB-EC"/>
</dbReference>
<dbReference type="GO" id="GO:0008218">
    <property type="term" value="P:bioluminescence"/>
    <property type="evidence" value="ECO:0000315"/>
    <property type="project" value="CACAO"/>
</dbReference>
<dbReference type="GO" id="GO:1905087">
    <property type="term" value="P:positive regulation of bioluminescence"/>
    <property type="evidence" value="ECO:0000315"/>
    <property type="project" value="CACAO"/>
</dbReference>
<dbReference type="GO" id="GO:0009372">
    <property type="term" value="P:quorum sensing"/>
    <property type="evidence" value="ECO:0007669"/>
    <property type="project" value="UniProtKB-KW"/>
</dbReference>
<dbReference type="GO" id="GO:0007165">
    <property type="term" value="P:signal transduction"/>
    <property type="evidence" value="ECO:0007669"/>
    <property type="project" value="TreeGrafter"/>
</dbReference>
<dbReference type="GO" id="GO:0052008">
    <property type="term" value="P:symbiont-mediated disruption of host cellular anatomical structure"/>
    <property type="evidence" value="ECO:0000315"/>
    <property type="project" value="CACAO"/>
</dbReference>
<dbReference type="Gene3D" id="3.40.630.30">
    <property type="match status" value="1"/>
</dbReference>
<dbReference type="InterPro" id="IPR016181">
    <property type="entry name" value="Acyl_CoA_acyltransferase"/>
</dbReference>
<dbReference type="InterPro" id="IPR018311">
    <property type="entry name" value="Autoind_synth_CS"/>
</dbReference>
<dbReference type="InterPro" id="IPR001690">
    <property type="entry name" value="Autoind_synthase"/>
</dbReference>
<dbReference type="PANTHER" id="PTHR39322">
    <property type="entry name" value="ACYL-HOMOSERINE-LACTONE SYNTHASE"/>
    <property type="match status" value="1"/>
</dbReference>
<dbReference type="PANTHER" id="PTHR39322:SF1">
    <property type="entry name" value="ISOVALERYL-HOMOSERINE LACTONE SYNTHASE"/>
    <property type="match status" value="1"/>
</dbReference>
<dbReference type="Pfam" id="PF00765">
    <property type="entry name" value="Autoind_synth"/>
    <property type="match status" value="1"/>
</dbReference>
<dbReference type="PRINTS" id="PR01549">
    <property type="entry name" value="AUTOINDCRSYN"/>
</dbReference>
<dbReference type="SUPFAM" id="SSF55729">
    <property type="entry name" value="Acyl-CoA N-acyltransferases (Nat)"/>
    <property type="match status" value="1"/>
</dbReference>
<dbReference type="PROSITE" id="PS00949">
    <property type="entry name" value="AUTOINDUCER_SYNTH_1"/>
    <property type="match status" value="1"/>
</dbReference>
<dbReference type="PROSITE" id="PS51187">
    <property type="entry name" value="AUTOINDUCER_SYNTH_2"/>
    <property type="match status" value="1"/>
</dbReference>
<keyword id="KW-0071">Autoinducer synthesis</keyword>
<keyword id="KW-0455">Luminescence</keyword>
<keyword id="KW-0673">Quorum sensing</keyword>
<keyword id="KW-0949">S-adenosyl-L-methionine</keyword>
<keyword id="KW-0808">Transferase</keyword>
<evidence type="ECO:0000255" key="1">
    <source>
        <dbReference type="PROSITE-ProRule" id="PRU00533"/>
    </source>
</evidence>
<feature type="chain" id="PRO_0000210888" description="Acyl-homoserine-lactone synthase">
    <location>
        <begin position="1"/>
        <end position="193"/>
    </location>
</feature>
<gene>
    <name type="primary">luxI</name>
</gene>
<sequence>MTIMIKKSDFLAIPSEEYKGILSLRYQVFKQRLEWDLVVENNLESDEYDNSNAEYIYACDDTENVSGCWRLLPTTGDYMLKSVFPELLGQQSAPKDPNIVELSRFAVGKNSSKINNSASEITMKLFEAIYKHAVSQGITEYVTVTSTAIERFLKRIKVPCHRIGDKEIHVLGDTKSVVLSMPINEQFKKAVLN</sequence>
<reference key="1">
    <citation type="journal article" date="1988" name="Biochemistry">
        <title>Nucleotide sequence of the luxR and luxI genes and structure of the primary regulatory region of the lux regulon of Vibrio fischeri ATCC 7744.</title>
        <authorList>
            <person name="Devine J.H."/>
            <person name="Countryman C."/>
            <person name="Baldwin T.O."/>
        </authorList>
    </citation>
    <scope>NUCLEOTIDE SEQUENCE [GENOMIC DNA]</scope>
    <source>
        <strain>ATCC 7744 / DSM 507 / NCIMB 1281 / 398</strain>
    </source>
</reference>
<reference key="2">
    <citation type="journal article" date="1987" name="Nucleic Acids Res.">
        <title>Nucleotide sequence of the regulatory locus controlling expression of bacterial genes for bioluminescence.</title>
        <authorList>
            <person name="Engebrecht J."/>
            <person name="Silverman M."/>
        </authorList>
    </citation>
    <scope>NUCLEOTIDE SEQUENCE [GENOMIC DNA]</scope>
    <source>
        <strain>MJ-1</strain>
    </source>
</reference>
<reference key="3">
    <citation type="submission" date="1999-07" db="EMBL/GenBank/DDBJ databases">
        <title>Vibrio fischeri Lux operon SalI digest.</title>
        <authorList>
            <person name="Knight T."/>
            <person name="Papadakis N."/>
        </authorList>
    </citation>
    <scope>NUCLEOTIDE SEQUENCE [GENOMIC DNA]</scope>
    <source>
        <strain>MJ-1</strain>
    </source>
</reference>
<organism>
    <name type="scientific">Aliivibrio fischeri</name>
    <name type="common">Vibrio fischeri</name>
    <dbReference type="NCBI Taxonomy" id="668"/>
    <lineage>
        <taxon>Bacteria</taxon>
        <taxon>Pseudomonadati</taxon>
        <taxon>Pseudomonadota</taxon>
        <taxon>Gammaproteobacteria</taxon>
        <taxon>Vibrionales</taxon>
        <taxon>Vibrionaceae</taxon>
        <taxon>Aliivibrio</taxon>
    </lineage>
</organism>
<name>LUXI_ALIFS</name>
<accession>P12747</accession>
<protein>
    <recommendedName>
        <fullName>Acyl-homoserine-lactone synthase</fullName>
        <ecNumber>2.3.1.184</ecNumber>
    </recommendedName>
    <alternativeName>
        <fullName>Autoinducer synthesis protein LuxI</fullName>
    </alternativeName>
</protein>
<comment type="function">
    <text>Required for the synthesis of OHHL (N-(3-oxohexanoyl)-L-homoserine lactone) also known as VAI or N-(beta-ketocaproyl)homoserine lactone or 3-oxo-N-(tetrahydro-2-oxo-3-furanyl)-hexanamide, an autoinducer molecule which binds to LuxR and thus acts in bioluminescence regulation.</text>
</comment>
<comment type="catalytic activity">
    <reaction>
        <text>a fatty acyl-[ACP] + S-adenosyl-L-methionine = an N-acyl-L-homoserine lactone + S-methyl-5'-thioadenosine + holo-[ACP] + H(+)</text>
        <dbReference type="Rhea" id="RHEA:10096"/>
        <dbReference type="Rhea" id="RHEA-COMP:9685"/>
        <dbReference type="Rhea" id="RHEA-COMP:14125"/>
        <dbReference type="ChEBI" id="CHEBI:15378"/>
        <dbReference type="ChEBI" id="CHEBI:17509"/>
        <dbReference type="ChEBI" id="CHEBI:55474"/>
        <dbReference type="ChEBI" id="CHEBI:59789"/>
        <dbReference type="ChEBI" id="CHEBI:64479"/>
        <dbReference type="ChEBI" id="CHEBI:138651"/>
        <dbReference type="EC" id="2.3.1.184"/>
    </reaction>
</comment>
<comment type="similarity">
    <text evidence="1">Belongs to the autoinducer synthase family.</text>
</comment>
<proteinExistence type="inferred from homology"/>